<organism>
    <name type="scientific">Sus scrofa</name>
    <name type="common">Pig</name>
    <dbReference type="NCBI Taxonomy" id="9823"/>
    <lineage>
        <taxon>Eukaryota</taxon>
        <taxon>Metazoa</taxon>
        <taxon>Chordata</taxon>
        <taxon>Craniata</taxon>
        <taxon>Vertebrata</taxon>
        <taxon>Euteleostomi</taxon>
        <taxon>Mammalia</taxon>
        <taxon>Eutheria</taxon>
        <taxon>Laurasiatheria</taxon>
        <taxon>Artiodactyla</taxon>
        <taxon>Suina</taxon>
        <taxon>Suidae</taxon>
        <taxon>Sus</taxon>
    </lineage>
</organism>
<dbReference type="EMBL" id="M31453">
    <property type="protein sequence ID" value="AAA31132.1"/>
    <property type="molecule type" value="mRNA"/>
</dbReference>
<dbReference type="PIR" id="JQ0117">
    <property type="entry name" value="GDPG"/>
</dbReference>
<dbReference type="RefSeq" id="NP_999398.1">
    <property type="nucleotide sequence ID" value="NM_214233.1"/>
</dbReference>
<dbReference type="RefSeq" id="XP_005655046.1">
    <property type="nucleotide sequence ID" value="XM_005654989.3"/>
</dbReference>
<dbReference type="PDB" id="1KTE">
    <property type="method" value="X-ray"/>
    <property type="resolution" value="2.20 A"/>
    <property type="chains" value="A=2-106"/>
</dbReference>
<dbReference type="PDBsum" id="1KTE"/>
<dbReference type="SMR" id="P12309"/>
<dbReference type="FunCoup" id="P12309">
    <property type="interactions" value="464"/>
</dbReference>
<dbReference type="STRING" id="9823.ENSSSCP00000059302"/>
<dbReference type="PaxDb" id="9823-ENSSSCP00000015066"/>
<dbReference type="PeptideAtlas" id="P12309"/>
<dbReference type="Ensembl" id="ENSSSCT00000051052.2">
    <property type="protein sequence ID" value="ENSSSCP00000059302.1"/>
    <property type="gene ID" value="ENSSSCG00000039731.3"/>
</dbReference>
<dbReference type="Ensembl" id="ENSSSCT00015042086.1">
    <property type="protein sequence ID" value="ENSSSCP00015016629.1"/>
    <property type="gene ID" value="ENSSSCG00015031581.1"/>
</dbReference>
<dbReference type="Ensembl" id="ENSSSCT00025011805.1">
    <property type="protein sequence ID" value="ENSSSCP00025004706.1"/>
    <property type="gene ID" value="ENSSSCG00025008850.1"/>
</dbReference>
<dbReference type="Ensembl" id="ENSSSCT00030011918.1">
    <property type="protein sequence ID" value="ENSSSCP00030005351.1"/>
    <property type="gene ID" value="ENSSSCG00030008733.1"/>
</dbReference>
<dbReference type="Ensembl" id="ENSSSCT00035063938.1">
    <property type="protein sequence ID" value="ENSSSCP00035025886.1"/>
    <property type="gene ID" value="ENSSSCG00035048008.1"/>
</dbReference>
<dbReference type="Ensembl" id="ENSSSCT00040014777.1">
    <property type="protein sequence ID" value="ENSSSCP00040005769.1"/>
    <property type="gene ID" value="ENSSSCG00040011271.1"/>
</dbReference>
<dbReference type="Ensembl" id="ENSSSCT00050100287.1">
    <property type="protein sequence ID" value="ENSSSCP00050043495.1"/>
    <property type="gene ID" value="ENSSSCG00050073370.1"/>
</dbReference>
<dbReference type="Ensembl" id="ENSSSCT00055017383.1">
    <property type="protein sequence ID" value="ENSSSCP00055013744.1"/>
    <property type="gene ID" value="ENSSSCG00055008895.1"/>
</dbReference>
<dbReference type="Ensembl" id="ENSSSCT00060034428.1">
    <property type="protein sequence ID" value="ENSSSCP00060014750.1"/>
    <property type="gene ID" value="ENSSSCG00060025386.1"/>
</dbReference>
<dbReference type="Ensembl" id="ENSSSCT00065016810.1">
    <property type="protein sequence ID" value="ENSSSCP00065006872.1"/>
    <property type="gene ID" value="ENSSSCG00065012614.1"/>
</dbReference>
<dbReference type="Ensembl" id="ENSSSCT00065016819.1">
    <property type="protein sequence ID" value="ENSSSCP00065006878.1"/>
    <property type="gene ID" value="ENSSSCG00065012614.1"/>
</dbReference>
<dbReference type="Ensembl" id="ENSSSCT00070018496.1">
    <property type="protein sequence ID" value="ENSSSCP00070015369.1"/>
    <property type="gene ID" value="ENSSSCG00070009533.1"/>
</dbReference>
<dbReference type="Ensembl" id="ENSSSCT00085025949">
    <property type="protein sequence ID" value="ENSSSCP00085018003"/>
    <property type="gene ID" value="ENSSSCG00085013676"/>
</dbReference>
<dbReference type="Ensembl" id="ENSSSCT00090040797">
    <property type="protein sequence ID" value="ENSSSCP00090025364"/>
    <property type="gene ID" value="ENSSSCG00090023011"/>
</dbReference>
<dbReference type="Ensembl" id="ENSSSCT00105025412">
    <property type="protein sequence ID" value="ENSSSCP00105018034"/>
    <property type="gene ID" value="ENSSSCG00105013015"/>
</dbReference>
<dbReference type="Ensembl" id="ENSSSCT00110019648">
    <property type="protein sequence ID" value="ENSSSCP00110013330"/>
    <property type="gene ID" value="ENSSSCG00110010202"/>
</dbReference>
<dbReference type="Ensembl" id="ENSSSCT00115024794">
    <property type="protein sequence ID" value="ENSSSCP00115023507"/>
    <property type="gene ID" value="ENSSSCG00115014296"/>
</dbReference>
<dbReference type="Ensembl" id="ENSSSCT00130022977">
    <property type="protein sequence ID" value="ENSSSCP00130015801"/>
    <property type="gene ID" value="ENSSSCG00130011966"/>
</dbReference>
<dbReference type="GeneID" id="397463"/>
<dbReference type="KEGG" id="ssc:397463"/>
<dbReference type="CTD" id="2745"/>
<dbReference type="eggNOG" id="KOG1752">
    <property type="taxonomic scope" value="Eukaryota"/>
</dbReference>
<dbReference type="GeneTree" id="ENSGT00900000141068"/>
<dbReference type="HOGENOM" id="CLU_026126_7_2_1"/>
<dbReference type="InParanoid" id="P12309"/>
<dbReference type="OMA" id="KPGHLEC"/>
<dbReference type="OrthoDB" id="418495at2759"/>
<dbReference type="TreeFam" id="TF326994"/>
<dbReference type="Reactome" id="R-SSC-499943">
    <property type="pathway name" value="Interconversion of nucleotide di- and triphosphates"/>
</dbReference>
<dbReference type="EvolutionaryTrace" id="P12309"/>
<dbReference type="Proteomes" id="UP000008227">
    <property type="component" value="Chromosome 2"/>
</dbReference>
<dbReference type="Proteomes" id="UP000314985">
    <property type="component" value="Chromosome 2"/>
</dbReference>
<dbReference type="Proteomes" id="UP000694570">
    <property type="component" value="Unplaced"/>
</dbReference>
<dbReference type="Proteomes" id="UP000694571">
    <property type="component" value="Unplaced"/>
</dbReference>
<dbReference type="Proteomes" id="UP000694720">
    <property type="component" value="Unplaced"/>
</dbReference>
<dbReference type="Proteomes" id="UP000694722">
    <property type="component" value="Unplaced"/>
</dbReference>
<dbReference type="Proteomes" id="UP000694723">
    <property type="component" value="Unplaced"/>
</dbReference>
<dbReference type="Proteomes" id="UP000694724">
    <property type="component" value="Unplaced"/>
</dbReference>
<dbReference type="Proteomes" id="UP000694725">
    <property type="component" value="Unplaced"/>
</dbReference>
<dbReference type="Proteomes" id="UP000694726">
    <property type="component" value="Unplaced"/>
</dbReference>
<dbReference type="Proteomes" id="UP000694727">
    <property type="component" value="Unplaced"/>
</dbReference>
<dbReference type="Proteomes" id="UP000694728">
    <property type="component" value="Unplaced"/>
</dbReference>
<dbReference type="Bgee" id="ENSSSCG00000039731">
    <property type="expression patterns" value="Expressed in epididymis and 46 other cell types or tissues"/>
</dbReference>
<dbReference type="ExpressionAtlas" id="P12309">
    <property type="expression patterns" value="baseline and differential"/>
</dbReference>
<dbReference type="GO" id="GO:0005737">
    <property type="term" value="C:cytoplasm"/>
    <property type="evidence" value="ECO:0007669"/>
    <property type="project" value="UniProtKB-SubCell"/>
</dbReference>
<dbReference type="GO" id="GO:0015038">
    <property type="term" value="F:glutathione disulfide oxidoreductase activity"/>
    <property type="evidence" value="ECO:0000318"/>
    <property type="project" value="GO_Central"/>
</dbReference>
<dbReference type="CDD" id="cd03419">
    <property type="entry name" value="GRX_GRXh_1_2_like"/>
    <property type="match status" value="1"/>
</dbReference>
<dbReference type="Gene3D" id="3.40.30.10">
    <property type="entry name" value="Glutaredoxin"/>
    <property type="match status" value="1"/>
</dbReference>
<dbReference type="InterPro" id="IPR011767">
    <property type="entry name" value="GLR_AS"/>
</dbReference>
<dbReference type="InterPro" id="IPR047185">
    <property type="entry name" value="GLRX1"/>
</dbReference>
<dbReference type="InterPro" id="IPR002109">
    <property type="entry name" value="Glutaredoxin"/>
</dbReference>
<dbReference type="InterPro" id="IPR011899">
    <property type="entry name" value="Glutaredoxin_euk/vir"/>
</dbReference>
<dbReference type="InterPro" id="IPR014025">
    <property type="entry name" value="Glutaredoxin_subgr"/>
</dbReference>
<dbReference type="InterPro" id="IPR036249">
    <property type="entry name" value="Thioredoxin-like_sf"/>
</dbReference>
<dbReference type="NCBIfam" id="TIGR02180">
    <property type="entry name" value="GRX_euk"/>
    <property type="match status" value="1"/>
</dbReference>
<dbReference type="PANTHER" id="PTHR46185">
    <property type="entry name" value="GLUTAREDOXIN-1"/>
    <property type="match status" value="1"/>
</dbReference>
<dbReference type="PANTHER" id="PTHR46185:SF1">
    <property type="entry name" value="GLUTAREDOXIN-1"/>
    <property type="match status" value="1"/>
</dbReference>
<dbReference type="Pfam" id="PF00462">
    <property type="entry name" value="Glutaredoxin"/>
    <property type="match status" value="1"/>
</dbReference>
<dbReference type="PRINTS" id="PR00160">
    <property type="entry name" value="GLUTAREDOXIN"/>
</dbReference>
<dbReference type="SUPFAM" id="SSF52833">
    <property type="entry name" value="Thioredoxin-like"/>
    <property type="match status" value="1"/>
</dbReference>
<dbReference type="PROSITE" id="PS00195">
    <property type="entry name" value="GLUTAREDOXIN_1"/>
    <property type="match status" value="1"/>
</dbReference>
<dbReference type="PROSITE" id="PS51354">
    <property type="entry name" value="GLUTAREDOXIN_2"/>
    <property type="match status" value="1"/>
</dbReference>
<protein>
    <recommendedName>
        <fullName>Glutaredoxin-1</fullName>
    </recommendedName>
    <alternativeName>
        <fullName>Thioltransferase-1</fullName>
        <shortName>TTase-1</shortName>
    </alternativeName>
</protein>
<name>GLRX1_PIG</name>
<keyword id="KW-0002">3D-structure</keyword>
<keyword id="KW-0007">Acetylation</keyword>
<keyword id="KW-0963">Cytoplasm</keyword>
<keyword id="KW-0903">Direct protein sequencing</keyword>
<keyword id="KW-1015">Disulfide bond</keyword>
<keyword id="KW-0249">Electron transport</keyword>
<keyword id="KW-0676">Redox-active center</keyword>
<keyword id="KW-1185">Reference proteome</keyword>
<keyword id="KW-0813">Transport</keyword>
<proteinExistence type="evidence at protein level"/>
<feature type="initiator methionine" description="Removed" evidence="1">
    <location>
        <position position="1"/>
    </location>
</feature>
<feature type="chain" id="PRO_0000141602" description="Glutaredoxin-1">
    <location>
        <begin position="2"/>
        <end position="106"/>
    </location>
</feature>
<feature type="domain" description="Glutaredoxin" evidence="3">
    <location>
        <begin position="3"/>
        <end position="106"/>
    </location>
</feature>
<feature type="modified residue" description="N-acetylalanine" evidence="1">
    <location>
        <position position="2"/>
    </location>
</feature>
<feature type="modified residue" description="N6-succinyllysine" evidence="2">
    <location>
        <position position="9"/>
    </location>
</feature>
<feature type="disulfide bond" description="Redox-active">
    <location>
        <begin position="23"/>
        <end position="26"/>
    </location>
</feature>
<feature type="disulfide bond" evidence="4">
    <location>
        <begin position="79"/>
        <end position="83"/>
    </location>
</feature>
<feature type="sequence conflict" description="In Ref. 3; AA sequence." evidence="5" ref="3">
    <original>AQ</original>
    <variation>QA</variation>
    <location>
        <begin position="2"/>
        <end position="3"/>
    </location>
</feature>
<feature type="helix" evidence="6">
    <location>
        <begin position="3"/>
        <end position="9"/>
    </location>
</feature>
<feature type="strand" evidence="6">
    <location>
        <begin position="15"/>
        <end position="19"/>
    </location>
</feature>
<feature type="helix" evidence="6">
    <location>
        <begin position="24"/>
        <end position="35"/>
    </location>
</feature>
<feature type="strand" evidence="6">
    <location>
        <begin position="42"/>
        <end position="47"/>
    </location>
</feature>
<feature type="helix" evidence="6">
    <location>
        <begin position="48"/>
        <end position="50"/>
    </location>
</feature>
<feature type="helix" evidence="6">
    <location>
        <begin position="54"/>
        <end position="65"/>
    </location>
</feature>
<feature type="strand" evidence="6">
    <location>
        <begin position="72"/>
        <end position="75"/>
    </location>
</feature>
<feature type="strand" evidence="6">
    <location>
        <begin position="78"/>
        <end position="82"/>
    </location>
</feature>
<feature type="helix" evidence="6">
    <location>
        <begin position="83"/>
        <end position="91"/>
    </location>
</feature>
<feature type="helix" evidence="6">
    <location>
        <begin position="94"/>
        <end position="102"/>
    </location>
</feature>
<reference key="1">
    <citation type="journal article" date="1989" name="Gene">
        <title>Cloning and sequencing the cDNA encoding pig liver thioltransferase.</title>
        <authorList>
            <person name="Yang Y."/>
            <person name="Gan Z.-R."/>
            <person name="Wells W.W."/>
        </authorList>
    </citation>
    <scope>NUCLEOTIDE SEQUENCE [MRNA]</scope>
    <source>
        <tissue>Liver</tissue>
    </source>
</reference>
<reference key="2">
    <citation type="journal article" date="1988" name="J. Cell Biol.">
        <title>Cloning and sequencing of the cDNA for pig liver thioltransferase (glutaredoxin).</title>
        <authorList>
            <person name="Yang Y."/>
            <person name="Wells W.W."/>
        </authorList>
    </citation>
    <scope>NUCLEOTIDE SEQUENCE [MRNA]</scope>
    <source>
        <tissue>Liver</tissue>
    </source>
</reference>
<reference key="3">
    <citation type="journal article" date="1987" name="J. Biol. Chem.">
        <title>The primary structure of pig liver thioltransferase.</title>
        <authorList>
            <person name="Gan Z.-R."/>
            <person name="Wells W.W."/>
        </authorList>
    </citation>
    <scope>PROTEIN SEQUENCE OF 2-106</scope>
    <source>
        <tissue>Liver</tissue>
    </source>
</reference>
<reference key="4">
    <citation type="journal article" date="1995" name="Protein Sci.">
        <title>Crystal structure of thioltransferase at 2.2-A resolution.</title>
        <authorList>
            <person name="Katti S.K."/>
            <person name="Robbins A.R."/>
            <person name="Yang Y."/>
            <person name="Wells W.W."/>
        </authorList>
    </citation>
    <scope>X-RAY CRYSTALLOGRAPHY (2.2 ANGSTROMS)</scope>
</reference>
<sequence>MAQAFVNSKIQPGKVVVFIKPTCPFCRKTQELLSQLPFKEGLLEFVDITATSDTNEIQDYLQQLTGARTVPRVFIGKECIGGCTDLESMHKRGELLTRLQQIGALK</sequence>
<comment type="function">
    <text>Has a glutathione-disulfide oxidoreductase activity in the presence of NADPH and glutathione reductase. Reduces low molecular weight disulfides and proteins.</text>
</comment>
<comment type="subcellular location">
    <subcellularLocation>
        <location>Cytoplasm</location>
    </subcellularLocation>
</comment>
<comment type="similarity">
    <text evidence="5">Belongs to the glutaredoxin family.</text>
</comment>
<evidence type="ECO:0000250" key="1">
    <source>
        <dbReference type="UniProtKB" id="P10575"/>
    </source>
</evidence>
<evidence type="ECO:0000250" key="2">
    <source>
        <dbReference type="UniProtKB" id="Q9QUH0"/>
    </source>
</evidence>
<evidence type="ECO:0000255" key="3">
    <source>
        <dbReference type="PROSITE-ProRule" id="PRU00686"/>
    </source>
</evidence>
<evidence type="ECO:0000269" key="4">
    <source>
    </source>
</evidence>
<evidence type="ECO:0000305" key="5"/>
<evidence type="ECO:0007829" key="6">
    <source>
        <dbReference type="PDB" id="1KTE"/>
    </source>
</evidence>
<gene>
    <name type="primary">GLRX</name>
    <name type="synonym">GRX</name>
</gene>
<accession>P12309</accession>